<reference key="1">
    <citation type="journal article" date="2004" name="Genome Res.">
        <title>The status, quality, and expansion of the NIH full-length cDNA project: the Mammalian Gene Collection (MGC).</title>
        <authorList>
            <consortium name="The MGC Project Team"/>
        </authorList>
    </citation>
    <scope>NUCLEOTIDE SEQUENCE [LARGE SCALE MRNA]</scope>
    <source>
        <tissue>Kidney</tissue>
    </source>
</reference>
<keyword id="KW-0472">Membrane</keyword>
<keyword id="KW-1185">Reference proteome</keyword>
<keyword id="KW-0812">Transmembrane</keyword>
<keyword id="KW-1133">Transmembrane helix</keyword>
<proteinExistence type="evidence at transcript level"/>
<comment type="subcellular location">
    <subcellularLocation>
        <location evidence="3">Membrane</location>
        <topology evidence="3">Single-pass membrane protein</topology>
    </subcellularLocation>
</comment>
<comment type="similarity">
    <text evidence="3">Belongs to the TMEM183 family.</text>
</comment>
<dbReference type="EMBL" id="BC079375">
    <property type="protein sequence ID" value="AAH79375.1"/>
    <property type="molecule type" value="mRNA"/>
</dbReference>
<dbReference type="RefSeq" id="NP_001013893.1">
    <property type="nucleotide sequence ID" value="NM_001013871.1"/>
</dbReference>
<dbReference type="FunCoup" id="Q68FS7">
    <property type="interactions" value="3365"/>
</dbReference>
<dbReference type="STRING" id="10116.ENSRNOP00000068555"/>
<dbReference type="PhosphoSitePlus" id="Q68FS7"/>
<dbReference type="PaxDb" id="10116-ENSRNOP00000005272"/>
<dbReference type="Ensembl" id="ENSRNOT00000100649.1">
    <property type="protein sequence ID" value="ENSRNOP00000096186.1"/>
    <property type="gene ID" value="ENSRNOG00000003594.6"/>
</dbReference>
<dbReference type="GeneID" id="289034"/>
<dbReference type="KEGG" id="rno:289034"/>
<dbReference type="UCSC" id="RGD:1309892">
    <property type="organism name" value="rat"/>
</dbReference>
<dbReference type="AGR" id="RGD:1309892"/>
<dbReference type="CTD" id="92703"/>
<dbReference type="RGD" id="1309892">
    <property type="gene designation" value="RGD1309892"/>
</dbReference>
<dbReference type="eggNOG" id="ENOG502QS4U">
    <property type="taxonomic scope" value="Eukaryota"/>
</dbReference>
<dbReference type="GeneTree" id="ENSGT00390000009310"/>
<dbReference type="HOGENOM" id="CLU_061444_1_0_1"/>
<dbReference type="InParanoid" id="Q68FS7"/>
<dbReference type="OrthoDB" id="10922at9989"/>
<dbReference type="PhylomeDB" id="Q68FS7"/>
<dbReference type="TreeFam" id="TF323300"/>
<dbReference type="PRO" id="PR:Q68FS7"/>
<dbReference type="Proteomes" id="UP000002494">
    <property type="component" value="Chromosome 13"/>
</dbReference>
<dbReference type="Bgee" id="ENSRNOG00000003594">
    <property type="expression patterns" value="Expressed in duodenum and 19 other cell types or tissues"/>
</dbReference>
<dbReference type="ExpressionAtlas" id="Q68FS7">
    <property type="expression patterns" value="baseline and differential"/>
</dbReference>
<dbReference type="GO" id="GO:0016020">
    <property type="term" value="C:membrane"/>
    <property type="evidence" value="ECO:0007669"/>
    <property type="project" value="UniProtKB-SubCell"/>
</dbReference>
<dbReference type="GO" id="GO:0019005">
    <property type="term" value="C:SCF ubiquitin ligase complex"/>
    <property type="evidence" value="ECO:0000318"/>
    <property type="project" value="GO_Central"/>
</dbReference>
<dbReference type="InterPro" id="IPR036047">
    <property type="entry name" value="F-box-like_dom_sf"/>
</dbReference>
<dbReference type="InterPro" id="IPR026509">
    <property type="entry name" value="TMEM183"/>
</dbReference>
<dbReference type="PANTHER" id="PTHR20988">
    <property type="entry name" value="TRANSMEMBRANE PROTEIN 183A-RELATED"/>
    <property type="match status" value="1"/>
</dbReference>
<dbReference type="PANTHER" id="PTHR20988:SF2">
    <property type="entry name" value="TRANSMEMBRANE PROTEIN 183A-RELATED"/>
    <property type="match status" value="1"/>
</dbReference>
<dbReference type="SUPFAM" id="SSF81383">
    <property type="entry name" value="F-box domain"/>
    <property type="match status" value="1"/>
</dbReference>
<feature type="chain" id="PRO_0000089254" description="Transmembrane protein 183">
    <location>
        <begin position="1"/>
        <end position="376"/>
    </location>
</feature>
<feature type="transmembrane region" description="Helical" evidence="1">
    <location>
        <begin position="300"/>
        <end position="320"/>
    </location>
</feature>
<feature type="region of interest" description="Disordered" evidence="2">
    <location>
        <begin position="1"/>
        <end position="21"/>
    </location>
</feature>
<feature type="region of interest" description="Disordered" evidence="2">
    <location>
        <begin position="81"/>
        <end position="127"/>
    </location>
</feature>
<feature type="compositionally biased region" description="Acidic residues" evidence="2">
    <location>
        <begin position="95"/>
        <end position="106"/>
    </location>
</feature>
<evidence type="ECO:0000255" key="1"/>
<evidence type="ECO:0000256" key="2">
    <source>
        <dbReference type="SAM" id="MobiDB-lite"/>
    </source>
</evidence>
<evidence type="ECO:0000305" key="3"/>
<accession>Q68FS7</accession>
<name>TM183_RAT</name>
<gene>
    <name type="primary">Tmem183</name>
</gene>
<protein>
    <recommendedName>
        <fullName>Transmembrane protein 183</fullName>
    </recommendedName>
</protein>
<sequence length="376" mass="42982">MARGPGQLSGPRPDTVTMPKRGKRLKFRAHDACSGRVTVADYANSDPAVVRSGRVKKAVANAVQQEVKSLCGLEASQVPAEEALSGVGEPSDILDSSDEMDAQEESTQERSVSRKKKSKRHKEDLDGAGGEEYPMDIWLLLASYIRPEDIVNFSLICKNAWTVTCTAAFWTRLYRRHYTLDASLPLRLRPESMEKLRCLRACVIRSLYHMYEPFAARISKNPAIPESTPSTLKNSKCLLFWCRKIVGNRQEPMWEFNFKFKKQSPRLKSKCMERLQPPIQYQDVHTNPDQDCCLLQVTTLNFIFIPIVMGMIFTLFTINVSTDMRHHRVRLVFQDSPVRGGQHLRSEQGVQVVLDPVHSVRLFDWWHPQYPFSLRA</sequence>
<organism>
    <name type="scientific">Rattus norvegicus</name>
    <name type="common">Rat</name>
    <dbReference type="NCBI Taxonomy" id="10116"/>
    <lineage>
        <taxon>Eukaryota</taxon>
        <taxon>Metazoa</taxon>
        <taxon>Chordata</taxon>
        <taxon>Craniata</taxon>
        <taxon>Vertebrata</taxon>
        <taxon>Euteleostomi</taxon>
        <taxon>Mammalia</taxon>
        <taxon>Eutheria</taxon>
        <taxon>Euarchontoglires</taxon>
        <taxon>Glires</taxon>
        <taxon>Rodentia</taxon>
        <taxon>Myomorpha</taxon>
        <taxon>Muroidea</taxon>
        <taxon>Muridae</taxon>
        <taxon>Murinae</taxon>
        <taxon>Rattus</taxon>
    </lineage>
</organism>